<reference key="1">
    <citation type="journal article" date="2001" name="Science">
        <title>Comparative genomics of Listeria species.</title>
        <authorList>
            <person name="Glaser P."/>
            <person name="Frangeul L."/>
            <person name="Buchrieser C."/>
            <person name="Rusniok C."/>
            <person name="Amend A."/>
            <person name="Baquero F."/>
            <person name="Berche P."/>
            <person name="Bloecker H."/>
            <person name="Brandt P."/>
            <person name="Chakraborty T."/>
            <person name="Charbit A."/>
            <person name="Chetouani F."/>
            <person name="Couve E."/>
            <person name="de Daruvar A."/>
            <person name="Dehoux P."/>
            <person name="Domann E."/>
            <person name="Dominguez-Bernal G."/>
            <person name="Duchaud E."/>
            <person name="Durant L."/>
            <person name="Dussurget O."/>
            <person name="Entian K.-D."/>
            <person name="Fsihi H."/>
            <person name="Garcia-del Portillo F."/>
            <person name="Garrido P."/>
            <person name="Gautier L."/>
            <person name="Goebel W."/>
            <person name="Gomez-Lopez N."/>
            <person name="Hain T."/>
            <person name="Hauf J."/>
            <person name="Jackson D."/>
            <person name="Jones L.-M."/>
            <person name="Kaerst U."/>
            <person name="Kreft J."/>
            <person name="Kuhn M."/>
            <person name="Kunst F."/>
            <person name="Kurapkat G."/>
            <person name="Madueno E."/>
            <person name="Maitournam A."/>
            <person name="Mata Vicente J."/>
            <person name="Ng E."/>
            <person name="Nedjari H."/>
            <person name="Nordsiek G."/>
            <person name="Novella S."/>
            <person name="de Pablos B."/>
            <person name="Perez-Diaz J.-C."/>
            <person name="Purcell R."/>
            <person name="Remmel B."/>
            <person name="Rose M."/>
            <person name="Schlueter T."/>
            <person name="Simoes N."/>
            <person name="Tierrez A."/>
            <person name="Vazquez-Boland J.-A."/>
            <person name="Voss H."/>
            <person name="Wehland J."/>
            <person name="Cossart P."/>
        </authorList>
    </citation>
    <scope>NUCLEOTIDE SEQUENCE [LARGE SCALE GENOMIC DNA]</scope>
    <source>
        <strain>ATCC BAA-680 / CLIP 11262</strain>
    </source>
</reference>
<sequence>MRKNWTDEEIRVLQNNYEYVDTEIIANFLNRSYHSIKNKATRLGISKNSEWTEDEDIYLKYFVYENDDDISKAAEFLGRTKDAVINRLVKLRKRDSSVSFIRRPWTEKEDEILKKNYIIMSNAQFAERLRRTKASVAGRKVLLGLTNKHMSKEDDKIIRHLGNQGYTIKEISAEMNLSYCLVKNYIRNHRINYRRESKNGMNGWRKEADATYSLYINAKKIKEGQA</sequence>
<gene>
    <name type="ordered locus">lin1255</name>
</gene>
<gene>
    <name type="ordered locus">lin1742</name>
</gene>
<proteinExistence type="predicted"/>
<name>Y1255_LISIN</name>
<accession>Q926A7</accession>
<comment type="similarity">
    <text evidence="1">To L.innocua lin2408 and lin2600.</text>
</comment>
<evidence type="ECO:0000305" key="1"/>
<dbReference type="EMBL" id="AL596168">
    <property type="protein sequence ID" value="CAC96486.1"/>
    <property type="molecule type" value="Genomic_DNA"/>
</dbReference>
<dbReference type="EMBL" id="AL596169">
    <property type="protein sequence ID" value="CAC96973.1"/>
    <property type="molecule type" value="Genomic_DNA"/>
</dbReference>
<dbReference type="PIR" id="AE1650">
    <property type="entry name" value="AE1650"/>
</dbReference>
<dbReference type="PIR" id="AF1589">
    <property type="entry name" value="AF1589"/>
</dbReference>
<dbReference type="RefSeq" id="WP_010990868.1">
    <property type="nucleotide sequence ID" value="NC_003212.1"/>
</dbReference>
<dbReference type="SMR" id="Q926A7"/>
<dbReference type="STRING" id="272626.gene:17565586"/>
<dbReference type="KEGG" id="lin:lin1255"/>
<dbReference type="KEGG" id="lin:lin1742"/>
<dbReference type="eggNOG" id="ENOG5032BT5">
    <property type="taxonomic scope" value="Bacteria"/>
</dbReference>
<dbReference type="HOGENOM" id="CLU_106666_0_0_9"/>
<dbReference type="OrthoDB" id="1669646at2"/>
<dbReference type="Proteomes" id="UP000002513">
    <property type="component" value="Chromosome"/>
</dbReference>
<dbReference type="InterPro" id="IPR009057">
    <property type="entry name" value="Homeodomain-like_sf"/>
</dbReference>
<dbReference type="InterPro" id="IPR001005">
    <property type="entry name" value="SANT/Myb"/>
</dbReference>
<dbReference type="SMART" id="SM00717">
    <property type="entry name" value="SANT"/>
    <property type="match status" value="2"/>
</dbReference>
<dbReference type="SUPFAM" id="SSF46689">
    <property type="entry name" value="Homeodomain-like"/>
    <property type="match status" value="1"/>
</dbReference>
<feature type="chain" id="PRO_0000210812" description="Uncharacterized protein Lin1255/Lin1742">
    <location>
        <begin position="1"/>
        <end position="226"/>
    </location>
</feature>
<organism>
    <name type="scientific">Listeria innocua serovar 6a (strain ATCC BAA-680 / CLIP 11262)</name>
    <dbReference type="NCBI Taxonomy" id="272626"/>
    <lineage>
        <taxon>Bacteria</taxon>
        <taxon>Bacillati</taxon>
        <taxon>Bacillota</taxon>
        <taxon>Bacilli</taxon>
        <taxon>Bacillales</taxon>
        <taxon>Listeriaceae</taxon>
        <taxon>Listeria</taxon>
    </lineage>
</organism>
<protein>
    <recommendedName>
        <fullName>Uncharacterized protein Lin1255/Lin1742</fullName>
    </recommendedName>
</protein>